<reference key="1">
    <citation type="journal article" date="1998" name="DNA Res.">
        <title>Structural analysis of Arabidopsis thaliana chromosome 5. VIII. Sequence features of the regions of 1,081,958 bp covered by seventeen physically assigned P1 and TAC clones.</title>
        <authorList>
            <person name="Asamizu E."/>
            <person name="Sato S."/>
            <person name="Kaneko T."/>
            <person name="Nakamura Y."/>
            <person name="Kotani H."/>
            <person name="Miyajima N."/>
            <person name="Tabata S."/>
        </authorList>
    </citation>
    <scope>NUCLEOTIDE SEQUENCE [LARGE SCALE GENOMIC DNA]</scope>
    <source>
        <strain>cv. Columbia</strain>
    </source>
</reference>
<reference key="2">
    <citation type="journal article" date="2017" name="Plant J.">
        <title>Araport11: a complete reannotation of the Arabidopsis thaliana reference genome.</title>
        <authorList>
            <person name="Cheng C.Y."/>
            <person name="Krishnakumar V."/>
            <person name="Chan A.P."/>
            <person name="Thibaud-Nissen F."/>
            <person name="Schobel S."/>
            <person name="Town C.D."/>
        </authorList>
    </citation>
    <scope>GENOME REANNOTATION</scope>
    <source>
        <strain>cv. Columbia</strain>
    </source>
</reference>
<reference key="3">
    <citation type="submission" date="2004-12" db="EMBL/GenBank/DDBJ databases">
        <title>Arabidopsis ORF clones.</title>
        <authorList>
            <person name="Cheuk R.F."/>
            <person name="Chen H."/>
            <person name="Kim C.J."/>
            <person name="Shinn P."/>
            <person name="Ecker J.R."/>
        </authorList>
    </citation>
    <scope>NUCLEOTIDE SEQUENCE [LARGE SCALE MRNA]</scope>
    <source>
        <strain>cv. Columbia</strain>
    </source>
</reference>
<reference key="4">
    <citation type="submission" date="2006-07" db="EMBL/GenBank/DDBJ databases">
        <title>Large-scale analysis of RIKEN Arabidopsis full-length (RAFL) cDNAs.</title>
        <authorList>
            <person name="Totoki Y."/>
            <person name="Seki M."/>
            <person name="Ishida J."/>
            <person name="Nakajima M."/>
            <person name="Enju A."/>
            <person name="Kamiya A."/>
            <person name="Narusaka M."/>
            <person name="Shin-i T."/>
            <person name="Nakagawa M."/>
            <person name="Sakamoto N."/>
            <person name="Oishi K."/>
            <person name="Kohara Y."/>
            <person name="Kobayashi M."/>
            <person name="Toyoda A."/>
            <person name="Sakaki Y."/>
            <person name="Sakurai T."/>
            <person name="Iida K."/>
            <person name="Akiyama K."/>
            <person name="Satou M."/>
            <person name="Toyoda T."/>
            <person name="Konagaya A."/>
            <person name="Carninci P."/>
            <person name="Kawai J."/>
            <person name="Hayashizaki Y."/>
            <person name="Shinozaki K."/>
        </authorList>
    </citation>
    <scope>NUCLEOTIDE SEQUENCE [LARGE SCALE MRNA]</scope>
    <source>
        <strain>cv. Columbia</strain>
    </source>
</reference>
<reference key="5">
    <citation type="journal article" date="2006" name="BMC Evol. Biol.">
        <title>The monosaccharide transporter gene family in land plants is ancient and shows differential subfamily expression and expansion across lineages.</title>
        <authorList>
            <person name="Johnson D.A."/>
            <person name="Hill J.P."/>
            <person name="Thomas M.A."/>
        </authorList>
    </citation>
    <scope>GENE FAMILY</scope>
</reference>
<reference key="6">
    <citation type="journal article" date="2008" name="PLoS ONE">
        <title>Sorting signals, N-terminal modifications and abundance of the chloroplast proteome.</title>
        <authorList>
            <person name="Zybailov B."/>
            <person name="Rutschow H."/>
            <person name="Friso G."/>
            <person name="Rudella A."/>
            <person name="Emanuelsson O."/>
            <person name="Sun Q."/>
            <person name="van Wijk K.J."/>
        </authorList>
    </citation>
    <scope>IDENTIFICATION BY MASS SPECTROMETRY</scope>
    <scope>SUBCELLULAR LOCATION [LARGE SCALE ANALYSIS]</scope>
</reference>
<feature type="transit peptide" description="Chloroplast" evidence="1">
    <location>
        <begin position="1"/>
        <end position="31"/>
    </location>
</feature>
<feature type="chain" id="PRO_0000259881" description="D-xylose-proton symporter-like 3, chloroplastic">
    <location>
        <begin position="32"/>
        <end position="558"/>
    </location>
</feature>
<feature type="transmembrane region" description="Helical; Name=1" evidence="1">
    <location>
        <begin position="98"/>
        <end position="118"/>
    </location>
</feature>
<feature type="transmembrane region" description="Helical; Name=2" evidence="1">
    <location>
        <begin position="146"/>
        <end position="166"/>
    </location>
</feature>
<feature type="transmembrane region" description="Helical; Name=3" evidence="1">
    <location>
        <begin position="175"/>
        <end position="195"/>
    </location>
</feature>
<feature type="transmembrane region" description="Helical; Name=4" evidence="1">
    <location>
        <begin position="197"/>
        <end position="217"/>
    </location>
</feature>
<feature type="transmembrane region" description="Helical; Name=5" evidence="1">
    <location>
        <begin position="238"/>
        <end position="258"/>
    </location>
</feature>
<feature type="transmembrane region" description="Helical; Name=6" evidence="1">
    <location>
        <begin position="264"/>
        <end position="284"/>
    </location>
</feature>
<feature type="transmembrane region" description="Helical; Name=7" evidence="1">
    <location>
        <begin position="359"/>
        <end position="379"/>
    </location>
</feature>
<feature type="transmembrane region" description="Helical; Name=8" evidence="1">
    <location>
        <begin position="400"/>
        <end position="420"/>
    </location>
</feature>
<feature type="transmembrane region" description="Helical; Name=9" evidence="1">
    <location>
        <begin position="426"/>
        <end position="446"/>
    </location>
</feature>
<feature type="transmembrane region" description="Helical; Name=10" evidence="1">
    <location>
        <begin position="449"/>
        <end position="469"/>
    </location>
</feature>
<feature type="transmembrane region" description="Helical; Name=11" evidence="1">
    <location>
        <begin position="491"/>
        <end position="511"/>
    </location>
</feature>
<feature type="transmembrane region" description="Helical; Name=12" evidence="1">
    <location>
        <begin position="522"/>
        <end position="542"/>
    </location>
</feature>
<feature type="sequence conflict" description="In Ref. 4; BAE98379." evidence="2" ref="4">
    <original>E</original>
    <variation>D</variation>
    <location>
        <position position="74"/>
    </location>
</feature>
<organism>
    <name type="scientific">Arabidopsis thaliana</name>
    <name type="common">Mouse-ear cress</name>
    <dbReference type="NCBI Taxonomy" id="3702"/>
    <lineage>
        <taxon>Eukaryota</taxon>
        <taxon>Viridiplantae</taxon>
        <taxon>Streptophyta</taxon>
        <taxon>Embryophyta</taxon>
        <taxon>Tracheophyta</taxon>
        <taxon>Spermatophyta</taxon>
        <taxon>Magnoliopsida</taxon>
        <taxon>eudicotyledons</taxon>
        <taxon>Gunneridae</taxon>
        <taxon>Pentapetalae</taxon>
        <taxon>rosids</taxon>
        <taxon>malvids</taxon>
        <taxon>Brassicales</taxon>
        <taxon>Brassicaceae</taxon>
        <taxon>Camelineae</taxon>
        <taxon>Arabidopsis</taxon>
    </lineage>
</organism>
<comment type="subcellular location">
    <subcellularLocation>
        <location evidence="2">Plastid</location>
        <location evidence="2">Chloroplast membrane</location>
        <topology evidence="2">Multi-pass membrane protein</topology>
    </subcellularLocation>
</comment>
<comment type="similarity">
    <text evidence="2">Belongs to the major facilitator superfamily. Sugar transporter (TC 2.A.1.1) family.</text>
</comment>
<gene>
    <name type="ordered locus">At5g59250</name>
    <name type="ORF">MNC17.140</name>
    <name type="ORF">MNC17.15</name>
</gene>
<evidence type="ECO:0000255" key="1"/>
<evidence type="ECO:0000305" key="2"/>
<proteinExistence type="evidence at protein level"/>
<sequence length="558" mass="59829">MAFAVSVQSHFAIRALKRDHFKNPSPRTFCSCFKSRPDSSYLSLKERTCFVSKPGLVTTRYRHIFQVGAETGGEFADSGEVADSLASDAPESFSWSSVILPFIFPALGGLLFGYDIGATSGATLSLQSPALSGTTWFNFSPVQLGLVVSGSLYGALLGSISVYGVADFLGRRRELIIAAVLYLLGSLITGCAPDLNILLVGRLLYGFGIGLAMHGAPLYIAETCPSQIRGTLISLKELFIVLGILLGFSVGSFQIDVVGGWRYMYGFGTPVALLMGLGMWSLPASPRWLLLRAVQGKGQLQEYKEKAMLALSKLRGRPPGDKISEKLVDDAYLSVKTAYEDEKSGGNFLEVFQGPNLKALTIGGGLVLFQQITGQPSVLYYAGSILQTAGFSAAADATRVSVIIGVFKLLMTWVAVAKVDDLGRRPLLIGGVSGIALSLFLLSAYYKFLGGFPLVAVGALLLYVGCYQISFGPISWLMVSEIFPLRTRGRGISLAVLTNFGSNAIVTFAFSPLKEFLGAENLFLLFGGIALVSLLFVILVVPETKGLSLEEIESKILK</sequence>
<dbReference type="EMBL" id="AB016890">
    <property type="protein sequence ID" value="BAB09770.1"/>
    <property type="molecule type" value="Genomic_DNA"/>
</dbReference>
<dbReference type="EMBL" id="CP002688">
    <property type="protein sequence ID" value="AED97162.1"/>
    <property type="molecule type" value="Genomic_DNA"/>
</dbReference>
<dbReference type="EMBL" id="BT015354">
    <property type="protein sequence ID" value="AAU05477.1"/>
    <property type="molecule type" value="mRNA"/>
</dbReference>
<dbReference type="EMBL" id="BT020338">
    <property type="protein sequence ID" value="AAV85693.1"/>
    <property type="molecule type" value="mRNA"/>
</dbReference>
<dbReference type="EMBL" id="AK226214">
    <property type="protein sequence ID" value="BAE98379.1"/>
    <property type="molecule type" value="mRNA"/>
</dbReference>
<dbReference type="RefSeq" id="NP_200733.2">
    <property type="nucleotide sequence ID" value="NM_125315.5"/>
</dbReference>
<dbReference type="SMR" id="Q0WWW9"/>
<dbReference type="BioGRID" id="21287">
    <property type="interactions" value="1"/>
</dbReference>
<dbReference type="FunCoup" id="Q0WWW9">
    <property type="interactions" value="647"/>
</dbReference>
<dbReference type="IntAct" id="Q0WWW9">
    <property type="interactions" value="1"/>
</dbReference>
<dbReference type="STRING" id="3702.Q0WWW9"/>
<dbReference type="TCDB" id="2.A.1.1.103">
    <property type="family name" value="the major facilitator superfamily (mfs)"/>
</dbReference>
<dbReference type="iPTMnet" id="Q0WWW9"/>
<dbReference type="PaxDb" id="3702-AT5G59250.1"/>
<dbReference type="ProteomicsDB" id="242492"/>
<dbReference type="EnsemblPlants" id="AT5G59250.1">
    <property type="protein sequence ID" value="AT5G59250.1"/>
    <property type="gene ID" value="AT5G59250"/>
</dbReference>
<dbReference type="GeneID" id="836043"/>
<dbReference type="Gramene" id="AT5G59250.1">
    <property type="protein sequence ID" value="AT5G59250.1"/>
    <property type="gene ID" value="AT5G59250"/>
</dbReference>
<dbReference type="KEGG" id="ath:AT5G59250"/>
<dbReference type="Araport" id="AT5G59250"/>
<dbReference type="TAIR" id="AT5G59250">
    <property type="gene designation" value="HP59"/>
</dbReference>
<dbReference type="eggNOG" id="KOG0254">
    <property type="taxonomic scope" value="Eukaryota"/>
</dbReference>
<dbReference type="HOGENOM" id="CLU_001265_30_5_1"/>
<dbReference type="InParanoid" id="Q0WWW9"/>
<dbReference type="OMA" id="TGSHMES"/>
<dbReference type="PhylomeDB" id="Q0WWW9"/>
<dbReference type="PRO" id="PR:Q0WWW9"/>
<dbReference type="Proteomes" id="UP000006548">
    <property type="component" value="Chromosome 5"/>
</dbReference>
<dbReference type="ExpressionAtlas" id="Q0WWW9">
    <property type="expression patterns" value="baseline and differential"/>
</dbReference>
<dbReference type="GO" id="GO:0009507">
    <property type="term" value="C:chloroplast"/>
    <property type="evidence" value="ECO:0007005"/>
    <property type="project" value="TAIR"/>
</dbReference>
<dbReference type="GO" id="GO:0009941">
    <property type="term" value="C:chloroplast envelope"/>
    <property type="evidence" value="ECO:0000314"/>
    <property type="project" value="TAIR"/>
</dbReference>
<dbReference type="GO" id="GO:0031969">
    <property type="term" value="C:chloroplast membrane"/>
    <property type="evidence" value="ECO:0007669"/>
    <property type="project" value="UniProtKB-SubCell"/>
</dbReference>
<dbReference type="GO" id="GO:0009536">
    <property type="term" value="C:plastid"/>
    <property type="evidence" value="ECO:0007005"/>
    <property type="project" value="TAIR"/>
</dbReference>
<dbReference type="GO" id="GO:0022857">
    <property type="term" value="F:transmembrane transporter activity"/>
    <property type="evidence" value="ECO:0007669"/>
    <property type="project" value="InterPro"/>
</dbReference>
<dbReference type="GO" id="GO:1904659">
    <property type="term" value="P:D-glucose transmembrane transport"/>
    <property type="evidence" value="ECO:0000314"/>
    <property type="project" value="TAIR"/>
</dbReference>
<dbReference type="CDD" id="cd17362">
    <property type="entry name" value="MFS_GLUT10_12_Class3_like"/>
    <property type="match status" value="1"/>
</dbReference>
<dbReference type="FunFam" id="1.20.1250.20:FF:000118">
    <property type="entry name" value="D-xylose-proton symporter-like 3, chloroplastic"/>
    <property type="match status" value="1"/>
</dbReference>
<dbReference type="Gene3D" id="1.20.1250.20">
    <property type="entry name" value="MFS general substrate transporter like domains"/>
    <property type="match status" value="1"/>
</dbReference>
<dbReference type="InterPro" id="IPR020846">
    <property type="entry name" value="MFS_dom"/>
</dbReference>
<dbReference type="InterPro" id="IPR005828">
    <property type="entry name" value="MFS_sugar_transport-like"/>
</dbReference>
<dbReference type="InterPro" id="IPR050820">
    <property type="entry name" value="MFS_Sugar_Transporter"/>
</dbReference>
<dbReference type="InterPro" id="IPR036259">
    <property type="entry name" value="MFS_trans_sf"/>
</dbReference>
<dbReference type="InterPro" id="IPR003663">
    <property type="entry name" value="Sugar/inositol_transpt"/>
</dbReference>
<dbReference type="InterPro" id="IPR005829">
    <property type="entry name" value="Sugar_transporter_CS"/>
</dbReference>
<dbReference type="NCBIfam" id="TIGR00879">
    <property type="entry name" value="SP"/>
    <property type="match status" value="1"/>
</dbReference>
<dbReference type="PANTHER" id="PTHR48023">
    <property type="entry name" value="D-XYLOSE-PROTON SYMPORTER-LIKE 2"/>
    <property type="match status" value="1"/>
</dbReference>
<dbReference type="PANTHER" id="PTHR48023:SF6">
    <property type="entry name" value="D-XYLOSE-PROTON SYMPORTER-LIKE 3, CHLOROPLASTIC"/>
    <property type="match status" value="1"/>
</dbReference>
<dbReference type="Pfam" id="PF00083">
    <property type="entry name" value="Sugar_tr"/>
    <property type="match status" value="1"/>
</dbReference>
<dbReference type="PRINTS" id="PR00171">
    <property type="entry name" value="SUGRTRNSPORT"/>
</dbReference>
<dbReference type="SUPFAM" id="SSF103473">
    <property type="entry name" value="MFS general substrate transporter"/>
    <property type="match status" value="1"/>
</dbReference>
<dbReference type="PROSITE" id="PS50850">
    <property type="entry name" value="MFS"/>
    <property type="match status" value="1"/>
</dbReference>
<dbReference type="PROSITE" id="PS00217">
    <property type="entry name" value="SUGAR_TRANSPORT_2"/>
    <property type="match status" value="1"/>
</dbReference>
<accession>Q0WWW9</accession>
<accession>Q9FIF2</accession>
<name>XYLL3_ARATH</name>
<keyword id="KW-0150">Chloroplast</keyword>
<keyword id="KW-0472">Membrane</keyword>
<keyword id="KW-0934">Plastid</keyword>
<keyword id="KW-1185">Reference proteome</keyword>
<keyword id="KW-0762">Sugar transport</keyword>
<keyword id="KW-0809">Transit peptide</keyword>
<keyword id="KW-0812">Transmembrane</keyword>
<keyword id="KW-1133">Transmembrane helix</keyword>
<keyword id="KW-0813">Transport</keyword>
<protein>
    <recommendedName>
        <fullName>D-xylose-proton symporter-like 3, chloroplastic</fullName>
    </recommendedName>
</protein>